<gene>
    <name evidence="1" type="primary">hfq</name>
    <name type="ordered locus">Lcho_2863</name>
</gene>
<reference key="1">
    <citation type="submission" date="2008-03" db="EMBL/GenBank/DDBJ databases">
        <title>Complete sequence of Leptothrix cholodnii SP-6.</title>
        <authorList>
            <consortium name="US DOE Joint Genome Institute"/>
            <person name="Copeland A."/>
            <person name="Lucas S."/>
            <person name="Lapidus A."/>
            <person name="Glavina del Rio T."/>
            <person name="Dalin E."/>
            <person name="Tice H."/>
            <person name="Bruce D."/>
            <person name="Goodwin L."/>
            <person name="Pitluck S."/>
            <person name="Chertkov O."/>
            <person name="Brettin T."/>
            <person name="Detter J.C."/>
            <person name="Han C."/>
            <person name="Kuske C.R."/>
            <person name="Schmutz J."/>
            <person name="Larimer F."/>
            <person name="Land M."/>
            <person name="Hauser L."/>
            <person name="Kyrpides N."/>
            <person name="Lykidis A."/>
            <person name="Emerson D."/>
            <person name="Richardson P."/>
        </authorList>
    </citation>
    <scope>NUCLEOTIDE SEQUENCE [LARGE SCALE GENOMIC DNA]</scope>
    <source>
        <strain>ATCC 51168 / LMG 8142 / SP-6</strain>
    </source>
</reference>
<proteinExistence type="inferred from homology"/>
<dbReference type="EMBL" id="CP001013">
    <property type="protein sequence ID" value="ACB35128.1"/>
    <property type="molecule type" value="Genomic_DNA"/>
</dbReference>
<dbReference type="RefSeq" id="WP_012347882.1">
    <property type="nucleotide sequence ID" value="NC_010524.1"/>
</dbReference>
<dbReference type="SMR" id="B1XXK8"/>
<dbReference type="STRING" id="395495.Lcho_2863"/>
<dbReference type="KEGG" id="lch:Lcho_2863"/>
<dbReference type="eggNOG" id="COG1923">
    <property type="taxonomic scope" value="Bacteria"/>
</dbReference>
<dbReference type="HOGENOM" id="CLU_113688_2_2_4"/>
<dbReference type="OrthoDB" id="9799751at2"/>
<dbReference type="Proteomes" id="UP000001693">
    <property type="component" value="Chromosome"/>
</dbReference>
<dbReference type="GO" id="GO:0005829">
    <property type="term" value="C:cytosol"/>
    <property type="evidence" value="ECO:0007669"/>
    <property type="project" value="TreeGrafter"/>
</dbReference>
<dbReference type="GO" id="GO:0003723">
    <property type="term" value="F:RNA binding"/>
    <property type="evidence" value="ECO:0007669"/>
    <property type="project" value="UniProtKB-UniRule"/>
</dbReference>
<dbReference type="GO" id="GO:0006355">
    <property type="term" value="P:regulation of DNA-templated transcription"/>
    <property type="evidence" value="ECO:0007669"/>
    <property type="project" value="InterPro"/>
</dbReference>
<dbReference type="GO" id="GO:0043487">
    <property type="term" value="P:regulation of RNA stability"/>
    <property type="evidence" value="ECO:0007669"/>
    <property type="project" value="TreeGrafter"/>
</dbReference>
<dbReference type="GO" id="GO:0045974">
    <property type="term" value="P:regulation of translation, ncRNA-mediated"/>
    <property type="evidence" value="ECO:0007669"/>
    <property type="project" value="TreeGrafter"/>
</dbReference>
<dbReference type="CDD" id="cd01716">
    <property type="entry name" value="Hfq"/>
    <property type="match status" value="1"/>
</dbReference>
<dbReference type="FunFam" id="2.30.30.100:FF:000001">
    <property type="entry name" value="RNA-binding protein Hfq"/>
    <property type="match status" value="1"/>
</dbReference>
<dbReference type="Gene3D" id="2.30.30.100">
    <property type="match status" value="1"/>
</dbReference>
<dbReference type="HAMAP" id="MF_00436">
    <property type="entry name" value="Hfq"/>
    <property type="match status" value="1"/>
</dbReference>
<dbReference type="InterPro" id="IPR005001">
    <property type="entry name" value="Hfq"/>
</dbReference>
<dbReference type="InterPro" id="IPR010920">
    <property type="entry name" value="LSM_dom_sf"/>
</dbReference>
<dbReference type="InterPro" id="IPR047575">
    <property type="entry name" value="Sm"/>
</dbReference>
<dbReference type="NCBIfam" id="TIGR02383">
    <property type="entry name" value="Hfq"/>
    <property type="match status" value="1"/>
</dbReference>
<dbReference type="NCBIfam" id="NF001602">
    <property type="entry name" value="PRK00395.1"/>
    <property type="match status" value="1"/>
</dbReference>
<dbReference type="PANTHER" id="PTHR34772">
    <property type="entry name" value="RNA-BINDING PROTEIN HFQ"/>
    <property type="match status" value="1"/>
</dbReference>
<dbReference type="PANTHER" id="PTHR34772:SF1">
    <property type="entry name" value="RNA-BINDING PROTEIN HFQ"/>
    <property type="match status" value="1"/>
</dbReference>
<dbReference type="Pfam" id="PF17209">
    <property type="entry name" value="Hfq"/>
    <property type="match status" value="1"/>
</dbReference>
<dbReference type="SUPFAM" id="SSF50182">
    <property type="entry name" value="Sm-like ribonucleoproteins"/>
    <property type="match status" value="1"/>
</dbReference>
<dbReference type="PROSITE" id="PS52002">
    <property type="entry name" value="SM"/>
    <property type="match status" value="1"/>
</dbReference>
<sequence>MSNKGQLLQDPFLNLLRKEHVPVSIYLVNGIKLQGHIESFDQYVVLLRNTVTQMVYKHAISTVVPGRPVNFHATEAQDSN</sequence>
<protein>
    <recommendedName>
        <fullName evidence="1">RNA-binding protein Hfq</fullName>
    </recommendedName>
</protein>
<name>HFQ_LEPCP</name>
<keyword id="KW-1185">Reference proteome</keyword>
<keyword id="KW-0694">RNA-binding</keyword>
<keyword id="KW-0346">Stress response</keyword>
<feature type="chain" id="PRO_1000190337" description="RNA-binding protein Hfq">
    <location>
        <begin position="1"/>
        <end position="80"/>
    </location>
</feature>
<feature type="domain" description="Sm" evidence="2">
    <location>
        <begin position="10"/>
        <end position="69"/>
    </location>
</feature>
<accession>B1XXK8</accession>
<evidence type="ECO:0000255" key="1">
    <source>
        <dbReference type="HAMAP-Rule" id="MF_00436"/>
    </source>
</evidence>
<evidence type="ECO:0000255" key="2">
    <source>
        <dbReference type="PROSITE-ProRule" id="PRU01346"/>
    </source>
</evidence>
<organism>
    <name type="scientific">Leptothrix cholodnii (strain ATCC 51168 / LMG 8142 / SP-6)</name>
    <name type="common">Leptothrix discophora (strain SP-6)</name>
    <dbReference type="NCBI Taxonomy" id="395495"/>
    <lineage>
        <taxon>Bacteria</taxon>
        <taxon>Pseudomonadati</taxon>
        <taxon>Pseudomonadota</taxon>
        <taxon>Betaproteobacteria</taxon>
        <taxon>Burkholderiales</taxon>
        <taxon>Sphaerotilaceae</taxon>
        <taxon>Leptothrix</taxon>
    </lineage>
</organism>
<comment type="function">
    <text evidence="1">RNA chaperone that binds small regulatory RNA (sRNAs) and mRNAs to facilitate mRNA translational regulation in response to envelope stress, environmental stress and changes in metabolite concentrations. Also binds with high specificity to tRNAs.</text>
</comment>
<comment type="subunit">
    <text evidence="1">Homohexamer.</text>
</comment>
<comment type="similarity">
    <text evidence="1">Belongs to the Hfq family.</text>
</comment>